<sequence length="704" mass="75724">MEAIKKVFEQKKAQDATAFVAFVTAGYPKKEDTVPVLLALQAGGADIIELGIPFSDPIADGPVIQEANTVALKNDIDYPTVLGQIREARQQGLTAPVLLMGYYNPMLAYGEDKAIQDAAEAGANGFIMVDLPPEEAIAFRQKCAASNLSYVPLIAPSTTLKRIQFLASIADSFIYVVSKMGTTGSSANVAVNEELPTILSRIREYTHVPLAVGFGVATRDQFNYVADAGADGVVIGSRIVNAIKAAGDGEVPQFVENYCREVSGKGEPSRVRSPGAAQRTPSQLTPNAETAKGVENILPARFGQFGGQYVPESLVDALAELEEAHKSAIEDPAFWEEVRSLYTYSNRPSNLYLAENLTKEAGGANIWLKREDLNHTGSHKINNALGQILLAKRIGKTRIIAETGAGQHGVATATVCAKFGLECVIYMGAEDVRRQALNVFRIEMLGGKAWVIPVHSGSCTLKDAVNEAMRDWVTNLSTTHYLVGSAIGPHPFPTIVRDFQKVIGEEIKAQLKEVRGKLPDVVVACVGGGSNAIGTFYDFIPDKSVRLVGVEAGGEGIDGHKHSATLSMGQPGVLHGVRTYILQDKAGQIIETHSISAGLDYPGVGPEHAWLKDSGRADYVVCTDEDALRGFRMLTQKEGIIPALESSHAIWEGVKIAKSLPKDKDIVICLSGRGDKDVEQISELLPKWADKLDWHVSSNAIPSK</sequence>
<comment type="catalytic activity">
    <reaction>
        <text>(1S,2R)-1-C-(indol-3-yl)glycerol 3-phosphate + L-serine = D-glyceraldehyde 3-phosphate + L-tryptophan + H2O</text>
        <dbReference type="Rhea" id="RHEA:10532"/>
        <dbReference type="ChEBI" id="CHEBI:15377"/>
        <dbReference type="ChEBI" id="CHEBI:33384"/>
        <dbReference type="ChEBI" id="CHEBI:57912"/>
        <dbReference type="ChEBI" id="CHEBI:58866"/>
        <dbReference type="ChEBI" id="CHEBI:59776"/>
        <dbReference type="EC" id="4.2.1.20"/>
    </reaction>
</comment>
<comment type="cofactor">
    <cofactor>
        <name>pyridoxal 5'-phosphate</name>
        <dbReference type="ChEBI" id="CHEBI:597326"/>
    </cofactor>
</comment>
<comment type="pathway">
    <text>Amino-acid biosynthesis; L-tryptophan biosynthesis; L-tryptophan from chorismate: step 5/5.</text>
</comment>
<comment type="similarity">
    <text evidence="2">In the N-terminal section; belongs to the TrpA family.</text>
</comment>
<comment type="similarity">
    <text evidence="2">In the C-terminal section; belongs to the TrpB family.</text>
</comment>
<evidence type="ECO:0000250" key="1"/>
<evidence type="ECO:0000305" key="2"/>
<reference key="1">
    <citation type="journal article" date="2010" name="Proc. Natl. Acad. Sci. U.S.A.">
        <title>Insights into evolution of multicellular fungi from the assembled chromosomes of the mushroom Coprinopsis cinerea (Coprinus cinereus).</title>
        <authorList>
            <person name="Stajich J.E."/>
            <person name="Wilke S.K."/>
            <person name="Ahren D."/>
            <person name="Au C.H."/>
            <person name="Birren B.W."/>
            <person name="Borodovsky M."/>
            <person name="Burns C."/>
            <person name="Canbaeck B."/>
            <person name="Casselton L.A."/>
            <person name="Cheng C.K."/>
            <person name="Deng J."/>
            <person name="Dietrich F.S."/>
            <person name="Fargo D.C."/>
            <person name="Farman M.L."/>
            <person name="Gathman A.C."/>
            <person name="Goldberg J."/>
            <person name="Guigo R."/>
            <person name="Hoegger P.J."/>
            <person name="Hooker J.B."/>
            <person name="Huggins A."/>
            <person name="James T.Y."/>
            <person name="Kamada T."/>
            <person name="Kilaru S."/>
            <person name="Kodira C."/>
            <person name="Kuees U."/>
            <person name="Kupfer D."/>
            <person name="Kwan H.S."/>
            <person name="Lomsadze A."/>
            <person name="Li W."/>
            <person name="Lilly W.W."/>
            <person name="Ma L.-J."/>
            <person name="Mackey A.J."/>
            <person name="Manning G."/>
            <person name="Martin F."/>
            <person name="Muraguchi H."/>
            <person name="Natvig D.O."/>
            <person name="Palmerini H."/>
            <person name="Ramesh M.A."/>
            <person name="Rehmeyer C.J."/>
            <person name="Roe B.A."/>
            <person name="Shenoy N."/>
            <person name="Stanke M."/>
            <person name="Ter-Hovhannisyan V."/>
            <person name="Tunlid A."/>
            <person name="Velagapudi R."/>
            <person name="Vision T.J."/>
            <person name="Zeng Q."/>
            <person name="Zolan M.E."/>
            <person name="Pukkila P.J."/>
        </authorList>
    </citation>
    <scope>NUCLEOTIDE SEQUENCE [LARGE SCALE GENOMIC DNA]</scope>
    <source>
        <strain>Okayama-7 / 130 / ATCC MYA-4618 / FGSC 9003</strain>
    </source>
</reference>
<keyword id="KW-0028">Amino-acid biosynthesis</keyword>
<keyword id="KW-0057">Aromatic amino acid biosynthesis</keyword>
<keyword id="KW-0456">Lyase</keyword>
<keyword id="KW-0663">Pyridoxal phosphate</keyword>
<keyword id="KW-1185">Reference proteome</keyword>
<keyword id="KW-0822">Tryptophan biosynthesis</keyword>
<gene>
    <name type="primary">TRP-1</name>
    <name type="ORF">CC1G_13871</name>
</gene>
<accession>A8NEP3</accession>
<accession>D6RKG0</accession>
<protein>
    <recommendedName>
        <fullName>Tryptophan synthase</fullName>
        <ecNumber>4.2.1.20</ecNumber>
    </recommendedName>
</protein>
<feature type="chain" id="PRO_0000333268" description="Tryptophan synthase">
    <location>
        <begin position="1"/>
        <end position="704"/>
    </location>
</feature>
<feature type="region of interest" description="Tryptophan synthase alpha chain">
    <location>
        <begin position="1"/>
        <end position="292"/>
    </location>
</feature>
<feature type="region of interest" description="Tryptophan synthase beta chain">
    <location>
        <begin position="293"/>
        <end position="704"/>
    </location>
</feature>
<feature type="active site" description="Proton acceptor" evidence="1">
    <location>
        <position position="49"/>
    </location>
</feature>
<feature type="active site" description="Proton acceptor" evidence="1">
    <location>
        <position position="60"/>
    </location>
</feature>
<feature type="modified residue" description="N6-(pyridoxal phosphate)lysine" evidence="1">
    <location>
        <position position="380"/>
    </location>
</feature>
<dbReference type="EC" id="4.2.1.20"/>
<dbReference type="EMBL" id="AACS02000002">
    <property type="protein sequence ID" value="EFI28341.1"/>
    <property type="molecule type" value="Genomic_DNA"/>
</dbReference>
<dbReference type="RefSeq" id="XP_002911835.1">
    <property type="nucleotide sequence ID" value="XM_002911789.1"/>
</dbReference>
<dbReference type="SMR" id="A8NEP3"/>
<dbReference type="FunCoup" id="A8NEP3">
    <property type="interactions" value="344"/>
</dbReference>
<dbReference type="STRING" id="240176.A8NEP3"/>
<dbReference type="GeneID" id="9379836"/>
<dbReference type="KEGG" id="cci:CC1G_13871"/>
<dbReference type="VEuPathDB" id="FungiDB:CC1G_13871"/>
<dbReference type="eggNOG" id="KOG1395">
    <property type="taxonomic scope" value="Eukaryota"/>
</dbReference>
<dbReference type="eggNOG" id="KOG4175">
    <property type="taxonomic scope" value="Eukaryota"/>
</dbReference>
<dbReference type="HOGENOM" id="CLU_016734_1_2_1"/>
<dbReference type="InParanoid" id="A8NEP3"/>
<dbReference type="OMA" id="VDTARHS"/>
<dbReference type="OrthoDB" id="10050244at2759"/>
<dbReference type="UniPathway" id="UPA00035">
    <property type="reaction ID" value="UER00044"/>
</dbReference>
<dbReference type="Proteomes" id="UP000001861">
    <property type="component" value="Unassembled WGS sequence"/>
</dbReference>
<dbReference type="GO" id="GO:0005737">
    <property type="term" value="C:cytoplasm"/>
    <property type="evidence" value="ECO:0007669"/>
    <property type="project" value="TreeGrafter"/>
</dbReference>
<dbReference type="GO" id="GO:0004834">
    <property type="term" value="F:tryptophan synthase activity"/>
    <property type="evidence" value="ECO:0007669"/>
    <property type="project" value="UniProtKB-EC"/>
</dbReference>
<dbReference type="CDD" id="cd06446">
    <property type="entry name" value="Trp-synth_B"/>
    <property type="match status" value="1"/>
</dbReference>
<dbReference type="CDD" id="cd04724">
    <property type="entry name" value="Tryptophan_synthase_alpha"/>
    <property type="match status" value="1"/>
</dbReference>
<dbReference type="FunFam" id="3.20.20.70:FF:000151">
    <property type="entry name" value="Tryptophan synthase"/>
    <property type="match status" value="1"/>
</dbReference>
<dbReference type="FunFam" id="3.40.50.1100:FF:000001">
    <property type="entry name" value="Tryptophan synthase beta chain"/>
    <property type="match status" value="1"/>
</dbReference>
<dbReference type="FunFam" id="3.40.50.1100:FF:000004">
    <property type="entry name" value="Tryptophan synthase beta chain"/>
    <property type="match status" value="1"/>
</dbReference>
<dbReference type="Gene3D" id="3.40.50.1100">
    <property type="match status" value="2"/>
</dbReference>
<dbReference type="Gene3D" id="3.20.20.70">
    <property type="entry name" value="Aldolase class I"/>
    <property type="match status" value="1"/>
</dbReference>
<dbReference type="HAMAP" id="MF_00131">
    <property type="entry name" value="Trp_synth_alpha"/>
    <property type="match status" value="1"/>
</dbReference>
<dbReference type="HAMAP" id="MF_00133">
    <property type="entry name" value="Trp_synth_beta"/>
    <property type="match status" value="1"/>
</dbReference>
<dbReference type="InterPro" id="IPR013785">
    <property type="entry name" value="Aldolase_TIM"/>
</dbReference>
<dbReference type="InterPro" id="IPR011060">
    <property type="entry name" value="RibuloseP-bd_barrel"/>
</dbReference>
<dbReference type="InterPro" id="IPR006653">
    <property type="entry name" value="Trp_synth_b_CS"/>
</dbReference>
<dbReference type="InterPro" id="IPR006654">
    <property type="entry name" value="Trp_synth_beta"/>
</dbReference>
<dbReference type="InterPro" id="IPR023026">
    <property type="entry name" value="Trp_synth_beta/beta-like"/>
</dbReference>
<dbReference type="InterPro" id="IPR018204">
    <property type="entry name" value="Trp_synthase_alpha_AS"/>
</dbReference>
<dbReference type="InterPro" id="IPR002028">
    <property type="entry name" value="Trp_synthase_suA"/>
</dbReference>
<dbReference type="InterPro" id="IPR001926">
    <property type="entry name" value="TrpB-like_PALP"/>
</dbReference>
<dbReference type="InterPro" id="IPR036052">
    <property type="entry name" value="TrpB-like_PALP_sf"/>
</dbReference>
<dbReference type="NCBIfam" id="TIGR00262">
    <property type="entry name" value="trpA"/>
    <property type="match status" value="1"/>
</dbReference>
<dbReference type="NCBIfam" id="TIGR00263">
    <property type="entry name" value="trpB"/>
    <property type="match status" value="1"/>
</dbReference>
<dbReference type="PANTHER" id="PTHR48077:SF3">
    <property type="entry name" value="TRYPTOPHAN SYNTHASE"/>
    <property type="match status" value="1"/>
</dbReference>
<dbReference type="PANTHER" id="PTHR48077">
    <property type="entry name" value="TRYPTOPHAN SYNTHASE-RELATED"/>
    <property type="match status" value="1"/>
</dbReference>
<dbReference type="Pfam" id="PF00291">
    <property type="entry name" value="PALP"/>
    <property type="match status" value="1"/>
</dbReference>
<dbReference type="Pfam" id="PF00290">
    <property type="entry name" value="Trp_syntA"/>
    <property type="match status" value="1"/>
</dbReference>
<dbReference type="SUPFAM" id="SSF51366">
    <property type="entry name" value="Ribulose-phoshate binding barrel"/>
    <property type="match status" value="1"/>
</dbReference>
<dbReference type="SUPFAM" id="SSF53686">
    <property type="entry name" value="Tryptophan synthase beta subunit-like PLP-dependent enzymes"/>
    <property type="match status" value="1"/>
</dbReference>
<dbReference type="PROSITE" id="PS00167">
    <property type="entry name" value="TRP_SYNTHASE_ALPHA"/>
    <property type="match status" value="1"/>
</dbReference>
<dbReference type="PROSITE" id="PS00168">
    <property type="entry name" value="TRP_SYNTHASE_BETA"/>
    <property type="match status" value="1"/>
</dbReference>
<proteinExistence type="inferred from homology"/>
<organism>
    <name type="scientific">Coprinopsis cinerea (strain Okayama-7 / 130 / ATCC MYA-4618 / FGSC 9003)</name>
    <name type="common">Inky cap fungus</name>
    <name type="synonym">Hormographiella aspergillata</name>
    <dbReference type="NCBI Taxonomy" id="240176"/>
    <lineage>
        <taxon>Eukaryota</taxon>
        <taxon>Fungi</taxon>
        <taxon>Dikarya</taxon>
        <taxon>Basidiomycota</taxon>
        <taxon>Agaricomycotina</taxon>
        <taxon>Agaricomycetes</taxon>
        <taxon>Agaricomycetidae</taxon>
        <taxon>Agaricales</taxon>
        <taxon>Agaricineae</taxon>
        <taxon>Psathyrellaceae</taxon>
        <taxon>Coprinopsis</taxon>
    </lineage>
</organism>
<name>TRP_COPC7</name>